<dbReference type="EMBL" id="M62606">
    <property type="protein sequence ID" value="AAA40155.1"/>
    <property type="molecule type" value="Genomic_DNA"/>
</dbReference>
<dbReference type="EMBL" id="M62601">
    <property type="protein sequence ID" value="AAA40155.1"/>
    <property type="status" value="JOINED"/>
    <property type="molecule type" value="Genomic_DNA"/>
</dbReference>
<dbReference type="EMBL" id="M62602">
    <property type="protein sequence ID" value="AAA40155.1"/>
    <property type="status" value="JOINED"/>
    <property type="molecule type" value="Genomic_DNA"/>
</dbReference>
<dbReference type="EMBL" id="M62603">
    <property type="protein sequence ID" value="AAA40155.1"/>
    <property type="status" value="JOINED"/>
    <property type="molecule type" value="Genomic_DNA"/>
</dbReference>
<dbReference type="EMBL" id="M62605">
    <property type="protein sequence ID" value="AAA40155.1"/>
    <property type="status" value="JOINED"/>
    <property type="molecule type" value="Genomic_DNA"/>
</dbReference>
<dbReference type="EMBL" id="M63114">
    <property type="protein sequence ID" value="AAA40156.1"/>
    <property type="molecule type" value="mRNA"/>
</dbReference>
<dbReference type="EMBL" id="BC003280">
    <property type="protein sequence ID" value="AAH03280.1"/>
    <property type="molecule type" value="mRNA"/>
</dbReference>
<dbReference type="EMBL" id="BC027352">
    <property type="protein sequence ID" value="AAH27352.1"/>
    <property type="molecule type" value="mRNA"/>
</dbReference>
<dbReference type="CCDS" id="CCDS15817.1"/>
<dbReference type="PIR" id="A34727">
    <property type="entry name" value="A34727"/>
</dbReference>
<dbReference type="RefSeq" id="NP_035642.1">
    <property type="nucleotide sequence ID" value="NM_011512.4"/>
</dbReference>
<dbReference type="BioGRID" id="203581">
    <property type="interactions" value="10"/>
</dbReference>
<dbReference type="FunCoup" id="Q64310">
    <property type="interactions" value="2956"/>
</dbReference>
<dbReference type="IntAct" id="Q64310">
    <property type="interactions" value="1"/>
</dbReference>
<dbReference type="STRING" id="10090.ENSMUSP00000015011"/>
<dbReference type="GlyGen" id="Q64310">
    <property type="glycosylation" value="1 site, 1 O-linked glycan (1 site)"/>
</dbReference>
<dbReference type="iPTMnet" id="Q64310"/>
<dbReference type="PhosphoSitePlus" id="Q64310"/>
<dbReference type="SwissPalm" id="Q64310"/>
<dbReference type="jPOST" id="Q64310"/>
<dbReference type="PaxDb" id="10090-ENSMUSP00000015011"/>
<dbReference type="ProteomicsDB" id="258780"/>
<dbReference type="Pumba" id="Q64310"/>
<dbReference type="Antibodypedia" id="31854">
    <property type="antibodies" value="131 antibodies from 20 providers"/>
</dbReference>
<dbReference type="DNASU" id="20932"/>
<dbReference type="Ensembl" id="ENSMUST00000015011.10">
    <property type="protein sequence ID" value="ENSMUSP00000015011.4"/>
    <property type="gene ID" value="ENSMUSG00000014867.10"/>
</dbReference>
<dbReference type="GeneID" id="20932"/>
<dbReference type="KEGG" id="mmu:20932"/>
<dbReference type="UCSC" id="uc008iwl.2">
    <property type="organism name" value="mouse"/>
</dbReference>
<dbReference type="AGR" id="MGI:98445"/>
<dbReference type="CTD" id="6836"/>
<dbReference type="MGI" id="MGI:98445">
    <property type="gene designation" value="Surf4"/>
</dbReference>
<dbReference type="VEuPathDB" id="HostDB:ENSMUSG00000014867"/>
<dbReference type="eggNOG" id="KOG3998">
    <property type="taxonomic scope" value="Eukaryota"/>
</dbReference>
<dbReference type="GeneTree" id="ENSGT00530000064123"/>
<dbReference type="HOGENOM" id="CLU_056195_0_0_1"/>
<dbReference type="InParanoid" id="Q64310"/>
<dbReference type="OMA" id="SSPRQYM"/>
<dbReference type="OrthoDB" id="7859621at2759"/>
<dbReference type="PhylomeDB" id="Q64310"/>
<dbReference type="TreeFam" id="TF300001"/>
<dbReference type="Reactome" id="R-MMU-6798695">
    <property type="pathway name" value="Neutrophil degranulation"/>
</dbReference>
<dbReference type="Reactome" id="R-MMU-6811434">
    <property type="pathway name" value="COPI-dependent Golgi-to-ER retrograde traffic"/>
</dbReference>
<dbReference type="BioGRID-ORCS" id="20932">
    <property type="hits" value="7 hits in 76 CRISPR screens"/>
</dbReference>
<dbReference type="ChiTaRS" id="Surf4">
    <property type="organism name" value="mouse"/>
</dbReference>
<dbReference type="PRO" id="PR:Q64310"/>
<dbReference type="Proteomes" id="UP000000589">
    <property type="component" value="Chromosome 2"/>
</dbReference>
<dbReference type="RNAct" id="Q64310">
    <property type="molecule type" value="protein"/>
</dbReference>
<dbReference type="Bgee" id="ENSMUSG00000014867">
    <property type="expression patterns" value="Expressed in seminal vesicle and 267 other cell types or tissues"/>
</dbReference>
<dbReference type="ExpressionAtlas" id="Q64310">
    <property type="expression patterns" value="baseline and differential"/>
</dbReference>
<dbReference type="GO" id="GO:0030134">
    <property type="term" value="C:COPII-coated ER to Golgi transport vesicle"/>
    <property type="evidence" value="ECO:0007669"/>
    <property type="project" value="Ensembl"/>
</dbReference>
<dbReference type="GO" id="GO:0005829">
    <property type="term" value="C:cytosol"/>
    <property type="evidence" value="ECO:0007669"/>
    <property type="project" value="Ensembl"/>
</dbReference>
<dbReference type="GO" id="GO:0070971">
    <property type="term" value="C:endoplasmic reticulum exit site"/>
    <property type="evidence" value="ECO:0007669"/>
    <property type="project" value="Ensembl"/>
</dbReference>
<dbReference type="GO" id="GO:0005789">
    <property type="term" value="C:endoplasmic reticulum membrane"/>
    <property type="evidence" value="ECO:0007669"/>
    <property type="project" value="UniProtKB-SubCell"/>
</dbReference>
<dbReference type="GO" id="GO:0033116">
    <property type="term" value="C:endoplasmic reticulum-Golgi intermediate compartment membrane"/>
    <property type="evidence" value="ECO:0007669"/>
    <property type="project" value="UniProtKB-SubCell"/>
</dbReference>
<dbReference type="GO" id="GO:0000139">
    <property type="term" value="C:Golgi membrane"/>
    <property type="evidence" value="ECO:0007669"/>
    <property type="project" value="UniProtKB-SubCell"/>
</dbReference>
<dbReference type="GO" id="GO:0031965">
    <property type="term" value="C:nuclear membrane"/>
    <property type="evidence" value="ECO:0007669"/>
    <property type="project" value="Ensembl"/>
</dbReference>
<dbReference type="GO" id="GO:0038024">
    <property type="term" value="F:cargo receptor activity"/>
    <property type="evidence" value="ECO:0000250"/>
    <property type="project" value="UniProtKB"/>
</dbReference>
<dbReference type="GO" id="GO:0097020">
    <property type="term" value="F:COPII receptor activity"/>
    <property type="evidence" value="ECO:0000314"/>
    <property type="project" value="UniProtKB"/>
</dbReference>
<dbReference type="GO" id="GO:0090110">
    <property type="term" value="P:COPII-coated vesicle cargo loading"/>
    <property type="evidence" value="ECO:0000315"/>
    <property type="project" value="UniProtKB"/>
</dbReference>
<dbReference type="GO" id="GO:0006888">
    <property type="term" value="P:endoplasmic reticulum to Golgi vesicle-mediated transport"/>
    <property type="evidence" value="ECO:0000315"/>
    <property type="project" value="UniProtKB"/>
</dbReference>
<dbReference type="GO" id="GO:0007030">
    <property type="term" value="P:Golgi organization"/>
    <property type="evidence" value="ECO:0007669"/>
    <property type="project" value="Ensembl"/>
</dbReference>
<dbReference type="GO" id="GO:0140353">
    <property type="term" value="P:lipid export from cell"/>
    <property type="evidence" value="ECO:0000315"/>
    <property type="project" value="UniProtKB"/>
</dbReference>
<dbReference type="GO" id="GO:0055088">
    <property type="term" value="P:lipid homeostasis"/>
    <property type="evidence" value="ECO:0000250"/>
    <property type="project" value="UniProtKB"/>
</dbReference>
<dbReference type="GO" id="GO:0042953">
    <property type="term" value="P:lipoprotein transport"/>
    <property type="evidence" value="ECO:0000315"/>
    <property type="project" value="UniProtKB"/>
</dbReference>
<dbReference type="GO" id="GO:0010638">
    <property type="term" value="P:positive regulation of organelle organization"/>
    <property type="evidence" value="ECO:0007669"/>
    <property type="project" value="Ensembl"/>
</dbReference>
<dbReference type="GO" id="GO:0032368">
    <property type="term" value="P:regulation of lipid transport"/>
    <property type="evidence" value="ECO:0000250"/>
    <property type="project" value="UniProtKB"/>
</dbReference>
<dbReference type="InterPro" id="IPR045214">
    <property type="entry name" value="Surf1/Surf4"/>
</dbReference>
<dbReference type="InterPro" id="IPR002995">
    <property type="entry name" value="Surf4"/>
</dbReference>
<dbReference type="PANTHER" id="PTHR23427">
    <property type="entry name" value="SURFEIT LOCUS PROTEIN"/>
    <property type="match status" value="1"/>
</dbReference>
<dbReference type="PANTHER" id="PTHR23427:SF13">
    <property type="entry name" value="SURFEIT LOCUS PROTEIN 4"/>
    <property type="match status" value="1"/>
</dbReference>
<dbReference type="Pfam" id="PF02077">
    <property type="entry name" value="SURF4"/>
    <property type="match status" value="1"/>
</dbReference>
<dbReference type="PROSITE" id="PS01339">
    <property type="entry name" value="SURF4"/>
    <property type="match status" value="1"/>
</dbReference>
<protein>
    <recommendedName>
        <fullName evidence="7">Surfeit locus protein 4</fullName>
    </recommendedName>
</protein>
<organism>
    <name type="scientific">Mus musculus</name>
    <name type="common">Mouse</name>
    <dbReference type="NCBI Taxonomy" id="10090"/>
    <lineage>
        <taxon>Eukaryota</taxon>
        <taxon>Metazoa</taxon>
        <taxon>Chordata</taxon>
        <taxon>Craniata</taxon>
        <taxon>Vertebrata</taxon>
        <taxon>Euteleostomi</taxon>
        <taxon>Mammalia</taxon>
        <taxon>Eutheria</taxon>
        <taxon>Euarchontoglires</taxon>
        <taxon>Glires</taxon>
        <taxon>Rodentia</taxon>
        <taxon>Myomorpha</taxon>
        <taxon>Muroidea</taxon>
        <taxon>Muridae</taxon>
        <taxon>Murinae</taxon>
        <taxon>Mus</taxon>
        <taxon>Mus</taxon>
    </lineage>
</organism>
<evidence type="ECO:0000250" key="1">
    <source>
        <dbReference type="UniProtKB" id="O15260"/>
    </source>
</evidence>
<evidence type="ECO:0000255" key="2"/>
<evidence type="ECO:0000269" key="3">
    <source>
    </source>
</evidence>
<evidence type="ECO:0000269" key="4">
    <source>
    </source>
</evidence>
<evidence type="ECO:0000269" key="5">
    <source>
    </source>
</evidence>
<evidence type="ECO:0000303" key="6">
    <source>
    </source>
</evidence>
<evidence type="ECO:0000303" key="7">
    <source>
    </source>
</evidence>
<evidence type="ECO:0000305" key="8"/>
<evidence type="ECO:0000312" key="9">
    <source>
        <dbReference type="MGI" id="MGI:98445"/>
    </source>
</evidence>
<reference key="1">
    <citation type="journal article" date="1990" name="Mol. Cell. Biol.">
        <title>The mouse surfeit locus contains a cluster of six genes associated with four CpG-rich islands in 32 kilobases of genomic DNA.</title>
        <authorList>
            <person name="Huxley C."/>
            <person name="Fried M."/>
        </authorList>
    </citation>
    <scope>NUCLEOTIDE SEQUENCE [GENOMIC DNA]</scope>
    <source>
        <strain>BALB/cJ</strain>
    </source>
</reference>
<reference key="2">
    <citation type="journal article" date="2004" name="Genome Res.">
        <title>The status, quality, and expansion of the NIH full-length cDNA project: the Mammalian Gene Collection (MGC).</title>
        <authorList>
            <consortium name="The MGC Project Team"/>
        </authorList>
    </citation>
    <scope>NUCLEOTIDE SEQUENCE [LARGE SCALE MRNA]</scope>
    <source>
        <strain>FVB/N</strain>
        <tissue>Mammary gland</tissue>
    </source>
</reference>
<reference key="3">
    <citation type="journal article" date="1995" name="Mol. Membr. Biol.">
        <title>The surf-4 gene encodes a novel 30 kDa integral membrane protein.</title>
        <authorList>
            <person name="Reeves J.E."/>
            <person name="Fried M."/>
        </authorList>
    </citation>
    <scope>SUBCELLULAR LOCATION</scope>
</reference>
<reference key="4">
    <citation type="journal article" date="2010" name="Cell">
        <title>A tissue-specific atlas of mouse protein phosphorylation and expression.</title>
        <authorList>
            <person name="Huttlin E.L."/>
            <person name="Jedrychowski M.P."/>
            <person name="Elias J.E."/>
            <person name="Goswami T."/>
            <person name="Rad R."/>
            <person name="Beausoleil S.A."/>
            <person name="Villen J."/>
            <person name="Haas W."/>
            <person name="Sowa M.E."/>
            <person name="Gygi S.P."/>
        </authorList>
    </citation>
    <scope>IDENTIFICATION BY MASS SPECTROMETRY [LARGE SCALE ANALYSIS]</scope>
    <source>
        <tissue>Brain</tissue>
        <tissue>Brown adipose tissue</tissue>
        <tissue>Heart</tissue>
        <tissue>Kidney</tissue>
        <tissue>Liver</tissue>
        <tissue>Lung</tissue>
        <tissue>Pancreas</tissue>
        <tissue>Spleen</tissue>
        <tissue>Testis</tissue>
    </source>
</reference>
<reference key="5">
    <citation type="journal article" date="2011" name="Mol. Biol. Cell">
        <title>Protrudin serves as an adaptor molecule that connects KIF5 and its cargoes in vesicular transport during process formation.</title>
        <authorList>
            <person name="Matsuzaki F."/>
            <person name="Shirane M."/>
            <person name="Matsumoto M."/>
            <person name="Nakayama K.I."/>
        </authorList>
    </citation>
    <scope>INTERACTION WITH ZFYVE27 AND KIF5A</scope>
</reference>
<reference key="6">
    <citation type="journal article" date="2020" name="PLoS ONE">
        <title>Murine Surf4 is essential for early embryonic development.</title>
        <authorList>
            <person name="Emmer B.T."/>
            <person name="Lascuna P.J."/>
            <person name="Tang V.T."/>
            <person name="Kotnik E.N."/>
            <person name="Saunders T.L."/>
            <person name="Khoriaty R."/>
            <person name="Ginsburg D."/>
        </authorList>
    </citation>
    <scope>DISRUPTION PHENOTYPE</scope>
</reference>
<reference key="7">
    <citation type="journal article" date="2021" name="Cell Metab.">
        <title>Receptor-mediated ER export of lipoproteins controls lipid homeostasis in mice and humans.</title>
        <authorList>
            <person name="Wang X."/>
            <person name="Wang H."/>
            <person name="Xu B."/>
            <person name="Huang D."/>
            <person name="Nie C."/>
            <person name="Pu L."/>
            <person name="Zajac G.J.M."/>
            <person name="Yan H."/>
            <person name="Zhao J."/>
            <person name="Shi F."/>
            <person name="Emmer B.T."/>
            <person name="Lu J."/>
            <person name="Wang R."/>
            <person name="Dong X."/>
            <person name="Dai J."/>
            <person name="Zhou W."/>
            <person name="Wang C."/>
            <person name="Gao G."/>
            <person name="Wang Y."/>
            <person name="Willer C."/>
            <person name="Lu X."/>
            <person name="Zhu Y."/>
            <person name="Chen X.W."/>
        </authorList>
    </citation>
    <scope>FUNCTION</scope>
    <scope>DISRUPTION PHENOTYPE</scope>
</reference>
<feature type="chain" id="PRO_0000127665" description="Surfeit locus protein 4">
    <location>
        <begin position="1"/>
        <end position="269"/>
    </location>
</feature>
<feature type="transmembrane region" description="Helical" evidence="2">
    <location>
        <begin position="65"/>
        <end position="85"/>
    </location>
</feature>
<feature type="transmembrane region" description="Helical" evidence="2">
    <location>
        <begin position="92"/>
        <end position="112"/>
    </location>
</feature>
<feature type="transmembrane region" description="Helical" evidence="2">
    <location>
        <begin position="179"/>
        <end position="199"/>
    </location>
</feature>
<feature type="transmembrane region" description="Helical" evidence="2">
    <location>
        <begin position="203"/>
        <end position="223"/>
    </location>
</feature>
<feature type="transmembrane region" description="Helical" evidence="2">
    <location>
        <begin position="242"/>
        <end position="262"/>
    </location>
</feature>
<feature type="short sequence motif" description="Di-lysine motif" evidence="1">
    <location>
        <begin position="266"/>
        <end position="269"/>
    </location>
</feature>
<accession>Q64310</accession>
<sequence length="269" mass="30381">MGQNDLMGTAEDFADQFLRVTKQYLPHVARLCLISTFLEDGIRMWFQWSEQRDYIDTTWSCGYLLASSFVFLNLLGQLTGCVLVLSRNFVQYACFGLFGIIALQTIAYSILWDLKFLMRNLALGGGLLLLLAESRSEGKSMFAGVPTMRESSPKQYMQLGGRVLLVLMFMTLLHFDASFFSIIQNIVGTALMILVAIGFKTKLAALTLVVWLFAINVYFNAFWTIPVYKPMHDFLKYDFFQTMSVIGGLLLVVALGPGGVSMDEKKKEW</sequence>
<proteinExistence type="evidence at protein level"/>
<gene>
    <name evidence="6 9" type="primary">Surf4</name>
    <name evidence="7" type="synonym">Surf-4</name>
</gene>
<keyword id="KW-0256">Endoplasmic reticulum</keyword>
<keyword id="KW-0333">Golgi apparatus</keyword>
<keyword id="KW-0472">Membrane</keyword>
<keyword id="KW-0653">Protein transport</keyword>
<keyword id="KW-1185">Reference proteome</keyword>
<keyword id="KW-0812">Transmembrane</keyword>
<keyword id="KW-1133">Transmembrane helix</keyword>
<keyword id="KW-0813">Transport</keyword>
<comment type="function">
    <text evidence="1 5">Endoplasmic reticulum cargo receptor that mediates the export of lipoproteins by recruiting cargos into COPII vesicles to facilitate their secretion. Acts as a cargo receptor for lipoproteins bearing both APOB and APOA1, thereby regulating lipoprotein delivery and the maintenance of lipid homeostasis. Synergizes with the GTPase SAR1B to mediate transport of circulating lipoproteins (PubMed:33186557). Promotes the secretion of PCSK9. Also mediates the efficient secretion of erythropoietin (EPO). May also play a role in the maintenance of the architecture of the endoplasmic reticulum-Golgi intermediate compartment and of the Golgi.</text>
</comment>
<comment type="subunit">
    <text evidence="1 3">Found in a complex composed at least of SURF4, TMED2 and TMED10 (By similarity). May interact with LMAN1 (By similarity). Interacts with ZFYVE27 and with KIF5A in a ZFYVE27-dependent manner (PubMed:21976701). Interacts with STING1 (By similarity). Interacts with SAR1B (By similarity). Interacts with TMEM41B (By similarity).</text>
</comment>
<comment type="subcellular location">
    <subcellularLocation>
        <location evidence="1">Endoplasmic reticulum membrane</location>
        <topology evidence="2">Multi-pass membrane protein</topology>
    </subcellularLocation>
    <subcellularLocation>
        <location evidence="1">Endoplasmic reticulum-Golgi intermediate compartment membrane</location>
        <topology evidence="2">Multi-pass membrane protein</topology>
    </subcellularLocation>
    <subcellularLocation>
        <location evidence="1">Golgi apparatus membrane</location>
        <topology evidence="2">Multi-pass membrane protein</topology>
    </subcellularLocation>
    <text evidence="1">Active at endoplasmic reticulum exit sites (ERES) where it is incorporated together with its lipoprotein cargos into COPII-coated vesicles. From the Golgi it is recycled back to the endoplasmic reticulum.</text>
</comment>
<comment type="domain">
    <text evidence="1">The di-lysine motif confers endoplasmic reticulum localization for type I membrane proteins.</text>
</comment>
<comment type="disruption phenotype">
    <text evidence="4 5">Embryonic lethality between 3.5 and 9.5 dpc (PubMed:31978056). Conditional deletion in the liver depletes plasma lipids and protects mice from atherosclerosis (PubMed:33186557).</text>
</comment>
<comment type="similarity">
    <text evidence="8">Belongs to the SURF4 family.</text>
</comment>
<name>SURF4_MOUSE</name>